<feature type="chain" id="PRO_0000277995" description="Chaperone protein DnaK">
    <location>
        <begin position="1"/>
        <end position="631"/>
    </location>
</feature>
<feature type="region of interest" description="Disordered" evidence="2">
    <location>
        <begin position="599"/>
        <end position="631"/>
    </location>
</feature>
<feature type="compositionally biased region" description="Low complexity" evidence="2">
    <location>
        <begin position="603"/>
        <end position="612"/>
    </location>
</feature>
<feature type="modified residue" description="Phosphothreonine; by autocatalysis" evidence="1">
    <location>
        <position position="197"/>
    </location>
</feature>
<gene>
    <name evidence="1" type="primary">dnaK</name>
    <name type="ordered locus">RBE_1113</name>
</gene>
<proteinExistence type="inferred from homology"/>
<evidence type="ECO:0000255" key="1">
    <source>
        <dbReference type="HAMAP-Rule" id="MF_00332"/>
    </source>
</evidence>
<evidence type="ECO:0000256" key="2">
    <source>
        <dbReference type="SAM" id="MobiDB-lite"/>
    </source>
</evidence>
<dbReference type="EMBL" id="CP000087">
    <property type="protein sequence ID" value="ABE05194.1"/>
    <property type="molecule type" value="Genomic_DNA"/>
</dbReference>
<dbReference type="RefSeq" id="WP_011477772.1">
    <property type="nucleotide sequence ID" value="NC_007940.1"/>
</dbReference>
<dbReference type="SMR" id="Q1RHH0"/>
<dbReference type="KEGG" id="rbe:RBE_1113"/>
<dbReference type="eggNOG" id="COG0443">
    <property type="taxonomic scope" value="Bacteria"/>
</dbReference>
<dbReference type="HOGENOM" id="CLU_005965_2_4_5"/>
<dbReference type="OrthoDB" id="9766019at2"/>
<dbReference type="Proteomes" id="UP000001951">
    <property type="component" value="Chromosome"/>
</dbReference>
<dbReference type="GO" id="GO:0005524">
    <property type="term" value="F:ATP binding"/>
    <property type="evidence" value="ECO:0007669"/>
    <property type="project" value="UniProtKB-UniRule"/>
</dbReference>
<dbReference type="GO" id="GO:0140662">
    <property type="term" value="F:ATP-dependent protein folding chaperone"/>
    <property type="evidence" value="ECO:0007669"/>
    <property type="project" value="InterPro"/>
</dbReference>
<dbReference type="GO" id="GO:0051082">
    <property type="term" value="F:unfolded protein binding"/>
    <property type="evidence" value="ECO:0007669"/>
    <property type="project" value="InterPro"/>
</dbReference>
<dbReference type="CDD" id="cd11733">
    <property type="entry name" value="ASKHA_NBD_HSP70_HSPA9"/>
    <property type="match status" value="1"/>
</dbReference>
<dbReference type="FunFam" id="2.60.34.10:FF:000014">
    <property type="entry name" value="Chaperone protein DnaK HSP70"/>
    <property type="match status" value="1"/>
</dbReference>
<dbReference type="FunFam" id="3.30.420.40:FF:000020">
    <property type="entry name" value="Chaperone protein HscA homolog"/>
    <property type="match status" value="1"/>
</dbReference>
<dbReference type="FunFam" id="3.30.30.30:FF:000003">
    <property type="entry name" value="Heat shock protein 9"/>
    <property type="match status" value="1"/>
</dbReference>
<dbReference type="FunFam" id="1.20.1270.10:FF:000001">
    <property type="entry name" value="Molecular chaperone DnaK"/>
    <property type="match status" value="1"/>
</dbReference>
<dbReference type="FunFam" id="3.30.420.40:FF:000004">
    <property type="entry name" value="Molecular chaperone DnaK"/>
    <property type="match status" value="1"/>
</dbReference>
<dbReference type="FunFam" id="3.90.640.10:FF:000003">
    <property type="entry name" value="Molecular chaperone DnaK"/>
    <property type="match status" value="1"/>
</dbReference>
<dbReference type="Gene3D" id="1.20.1270.10">
    <property type="match status" value="1"/>
</dbReference>
<dbReference type="Gene3D" id="3.30.420.40">
    <property type="match status" value="2"/>
</dbReference>
<dbReference type="Gene3D" id="3.90.640.10">
    <property type="entry name" value="Actin, Chain A, domain 4"/>
    <property type="match status" value="1"/>
</dbReference>
<dbReference type="Gene3D" id="2.60.34.10">
    <property type="entry name" value="Substrate Binding Domain Of DNAk, Chain A, domain 1"/>
    <property type="match status" value="1"/>
</dbReference>
<dbReference type="HAMAP" id="MF_00332">
    <property type="entry name" value="DnaK"/>
    <property type="match status" value="1"/>
</dbReference>
<dbReference type="InterPro" id="IPR043129">
    <property type="entry name" value="ATPase_NBD"/>
</dbReference>
<dbReference type="InterPro" id="IPR012725">
    <property type="entry name" value="Chaperone_DnaK"/>
</dbReference>
<dbReference type="InterPro" id="IPR018181">
    <property type="entry name" value="Heat_shock_70_CS"/>
</dbReference>
<dbReference type="InterPro" id="IPR029048">
    <property type="entry name" value="HSP70_C_sf"/>
</dbReference>
<dbReference type="InterPro" id="IPR029047">
    <property type="entry name" value="HSP70_peptide-bd_sf"/>
</dbReference>
<dbReference type="InterPro" id="IPR013126">
    <property type="entry name" value="Hsp_70_fam"/>
</dbReference>
<dbReference type="NCBIfam" id="NF001413">
    <property type="entry name" value="PRK00290.1"/>
    <property type="match status" value="1"/>
</dbReference>
<dbReference type="NCBIfam" id="NF003520">
    <property type="entry name" value="PRK05183.1"/>
    <property type="match status" value="1"/>
</dbReference>
<dbReference type="NCBIfam" id="TIGR02350">
    <property type="entry name" value="prok_dnaK"/>
    <property type="match status" value="1"/>
</dbReference>
<dbReference type="PANTHER" id="PTHR19375">
    <property type="entry name" value="HEAT SHOCK PROTEIN 70KDA"/>
    <property type="match status" value="1"/>
</dbReference>
<dbReference type="Pfam" id="PF00012">
    <property type="entry name" value="HSP70"/>
    <property type="match status" value="1"/>
</dbReference>
<dbReference type="PRINTS" id="PR00301">
    <property type="entry name" value="HEATSHOCK70"/>
</dbReference>
<dbReference type="SUPFAM" id="SSF53067">
    <property type="entry name" value="Actin-like ATPase domain"/>
    <property type="match status" value="2"/>
</dbReference>
<dbReference type="SUPFAM" id="SSF100934">
    <property type="entry name" value="Heat shock protein 70kD (HSP70), C-terminal subdomain"/>
    <property type="match status" value="1"/>
</dbReference>
<dbReference type="SUPFAM" id="SSF100920">
    <property type="entry name" value="Heat shock protein 70kD (HSP70), peptide-binding domain"/>
    <property type="match status" value="1"/>
</dbReference>
<dbReference type="PROSITE" id="PS00297">
    <property type="entry name" value="HSP70_1"/>
    <property type="match status" value="1"/>
</dbReference>
<dbReference type="PROSITE" id="PS00329">
    <property type="entry name" value="HSP70_2"/>
    <property type="match status" value="1"/>
</dbReference>
<dbReference type="PROSITE" id="PS01036">
    <property type="entry name" value="HSP70_3"/>
    <property type="match status" value="1"/>
</dbReference>
<accession>Q1RHH0</accession>
<protein>
    <recommendedName>
        <fullName evidence="1">Chaperone protein DnaK</fullName>
    </recommendedName>
    <alternativeName>
        <fullName evidence="1">HSP70</fullName>
    </alternativeName>
    <alternativeName>
        <fullName evidence="1">Heat shock 70 kDa protein</fullName>
    </alternativeName>
    <alternativeName>
        <fullName evidence="1">Heat shock protein 70</fullName>
    </alternativeName>
</protein>
<comment type="function">
    <text evidence="1">Acts as a chaperone.</text>
</comment>
<comment type="induction">
    <text evidence="1">By stress conditions e.g. heat shock.</text>
</comment>
<comment type="similarity">
    <text evidence="1">Belongs to the heat shock protein 70 family.</text>
</comment>
<name>DNAK_RICBR</name>
<keyword id="KW-0067">ATP-binding</keyword>
<keyword id="KW-0143">Chaperone</keyword>
<keyword id="KW-0547">Nucleotide-binding</keyword>
<keyword id="KW-0597">Phosphoprotein</keyword>
<keyword id="KW-0346">Stress response</keyword>
<reference key="1">
    <citation type="journal article" date="2006" name="PLoS Genet.">
        <title>Genome sequence of Rickettsia bellii illuminates the role of amoebae in gene exchanges between intracellular pathogens.</title>
        <authorList>
            <person name="Ogata H."/>
            <person name="La Scola B."/>
            <person name="Audic S."/>
            <person name="Renesto P."/>
            <person name="Blanc G."/>
            <person name="Robert C."/>
            <person name="Fournier P.-E."/>
            <person name="Claverie J.-M."/>
            <person name="Raoult D."/>
        </authorList>
    </citation>
    <scope>NUCLEOTIDE SEQUENCE [LARGE SCALE GENOMIC DNA]</scope>
    <source>
        <strain>RML369-C</strain>
    </source>
</reference>
<sequence length="631" mass="68206">MGKVIGIDLGTTNSCVAVMEGKEPKVIENSEGERTTPSIIAFANGEKLVGQSAKRQAVTNPRNTVYAVKRLIGRNFTDPMVKKDQEIVPYNIVKADNGDAWVEVEGKKHSPSQISAFILQKMKETAENYLGEKVTQAVITVPAYFNDAQRQATKDAGKIAGLEVLRIINEPTAAALAYGFDKSASKTIAVYDLGGGTFDVSILEIGDGVFEVKSTNGDTFLGGEDFDTRILEHLINTFKKESGIDLRNDPLALQRLKEAAEKAKKELSSALTTDINLPYITADNSGPKHLNIKFTRAELEKLVDDLIEKTIEPCRKALKDAGLKASDIQEVVLVGGMTRMPKVQEAVEKFFGRALHKGVNPDEVVALGAAIQGGVLNKEVTDILLLDVTPLSLGIETLGGVFTRLIDRNTTIPSKKSQVFSTADDNQHAVTIRVFQGEREMAKDNKMLGQFNLEGIPPAPRGVPQIEVTFDIDANGIVHVSAKDKASGKEQRVTIQASGGLSDAEIEQMVKDAEKNADEDKKHKELIEAKNAADSLIYSTEKTLTDYSDKLSSEDKGGVEEALSALKAVLDSEDASLIKEKTESLTAASMKIGEAMYKAQSDAGAAGSASEENTTSNEKVVDADFEDVEKK</sequence>
<organism>
    <name type="scientific">Rickettsia bellii (strain RML369-C)</name>
    <dbReference type="NCBI Taxonomy" id="336407"/>
    <lineage>
        <taxon>Bacteria</taxon>
        <taxon>Pseudomonadati</taxon>
        <taxon>Pseudomonadota</taxon>
        <taxon>Alphaproteobacteria</taxon>
        <taxon>Rickettsiales</taxon>
        <taxon>Rickettsiaceae</taxon>
        <taxon>Rickettsieae</taxon>
        <taxon>Rickettsia</taxon>
        <taxon>belli group</taxon>
    </lineage>
</organism>